<name>YCQ4_SCHPO</name>
<proteinExistence type="inferred from homology"/>
<organism>
    <name type="scientific">Schizosaccharomyces pombe (strain 972 / ATCC 24843)</name>
    <name type="common">Fission yeast</name>
    <dbReference type="NCBI Taxonomy" id="284812"/>
    <lineage>
        <taxon>Eukaryota</taxon>
        <taxon>Fungi</taxon>
        <taxon>Dikarya</taxon>
        <taxon>Ascomycota</taxon>
        <taxon>Taphrinomycotina</taxon>
        <taxon>Schizosaccharomycetes</taxon>
        <taxon>Schizosaccharomycetales</taxon>
        <taxon>Schizosaccharomycetaceae</taxon>
        <taxon>Schizosaccharomyces</taxon>
    </lineage>
</organism>
<comment type="subcellular location">
    <subcellularLocation>
        <location evidence="3">Membrane</location>
        <topology evidence="3">Multi-pass membrane protein</topology>
    </subcellularLocation>
</comment>
<comment type="similarity">
    <text evidence="3">Belongs to the amino acid-polyamine-organocation (APC) superfamily.</text>
</comment>
<keyword id="KW-0029">Amino-acid transport</keyword>
<keyword id="KW-0472">Membrane</keyword>
<keyword id="KW-1185">Reference proteome</keyword>
<keyword id="KW-0812">Transmembrane</keyword>
<keyword id="KW-1133">Transmembrane helix</keyword>
<keyword id="KW-0813">Transport</keyword>
<dbReference type="EMBL" id="CU329672">
    <property type="protein sequence ID" value="CAA20834.1"/>
    <property type="molecule type" value="Genomic_DNA"/>
</dbReference>
<dbReference type="PIR" id="T41588">
    <property type="entry name" value="T41588"/>
</dbReference>
<dbReference type="RefSeq" id="NP_588377.1">
    <property type="nucleotide sequence ID" value="NM_001023368.2"/>
</dbReference>
<dbReference type="SMR" id="O74537"/>
<dbReference type="BioGRID" id="275641">
    <property type="interactions" value="1"/>
</dbReference>
<dbReference type="STRING" id="284812.O74537"/>
<dbReference type="iPTMnet" id="O74537"/>
<dbReference type="SwissPalm" id="O74537"/>
<dbReference type="PaxDb" id="4896-SPCC74.04.1"/>
<dbReference type="EnsemblFungi" id="SPCC74.04.1">
    <property type="protein sequence ID" value="SPCC74.04.1:pep"/>
    <property type="gene ID" value="SPCC74.04"/>
</dbReference>
<dbReference type="KEGG" id="spo:2539069"/>
<dbReference type="PomBase" id="SPCC74.04"/>
<dbReference type="VEuPathDB" id="FungiDB:SPCC74.04"/>
<dbReference type="eggNOG" id="KOG1289">
    <property type="taxonomic scope" value="Eukaryota"/>
</dbReference>
<dbReference type="HOGENOM" id="CLU_004495_0_3_1"/>
<dbReference type="InParanoid" id="O74537"/>
<dbReference type="OMA" id="DAPFHMS"/>
<dbReference type="PhylomeDB" id="O74537"/>
<dbReference type="PRO" id="PR:O74537"/>
<dbReference type="Proteomes" id="UP000002485">
    <property type="component" value="Chromosome III"/>
</dbReference>
<dbReference type="GO" id="GO:0005737">
    <property type="term" value="C:cytoplasm"/>
    <property type="evidence" value="ECO:0007005"/>
    <property type="project" value="PomBase"/>
</dbReference>
<dbReference type="GO" id="GO:0016020">
    <property type="term" value="C:membrane"/>
    <property type="evidence" value="ECO:0007669"/>
    <property type="project" value="UniProtKB-SubCell"/>
</dbReference>
<dbReference type="GO" id="GO:0015171">
    <property type="term" value="F:amino acid transmembrane transporter activity"/>
    <property type="evidence" value="ECO:0000255"/>
    <property type="project" value="PomBase"/>
</dbReference>
<dbReference type="GO" id="GO:0015185">
    <property type="term" value="F:gamma-aminobutyric acid transmembrane transporter activity"/>
    <property type="evidence" value="ECO:0000318"/>
    <property type="project" value="GO_Central"/>
</dbReference>
<dbReference type="GO" id="GO:0003333">
    <property type="term" value="P:amino acid transmembrane transport"/>
    <property type="evidence" value="ECO:0000255"/>
    <property type="project" value="PomBase"/>
</dbReference>
<dbReference type="GO" id="GO:0015812">
    <property type="term" value="P:gamma-aminobutyric acid transport"/>
    <property type="evidence" value="ECO:0000318"/>
    <property type="project" value="GO_Central"/>
</dbReference>
<dbReference type="FunFam" id="1.20.1740.10:FF:000046">
    <property type="entry name" value="Amino-acid permease, putative"/>
    <property type="match status" value="1"/>
</dbReference>
<dbReference type="Gene3D" id="1.20.1740.10">
    <property type="entry name" value="Amino acid/polyamine transporter I"/>
    <property type="match status" value="1"/>
</dbReference>
<dbReference type="InterPro" id="IPR002293">
    <property type="entry name" value="AA/rel_permease1"/>
</dbReference>
<dbReference type="PANTHER" id="PTHR45649:SF52">
    <property type="entry name" value="AMINO ACID PERMEASE"/>
    <property type="match status" value="1"/>
</dbReference>
<dbReference type="PANTHER" id="PTHR45649">
    <property type="entry name" value="AMINO-ACID PERMEASE BAT1"/>
    <property type="match status" value="1"/>
</dbReference>
<dbReference type="Pfam" id="PF13520">
    <property type="entry name" value="AA_permease_2"/>
    <property type="match status" value="1"/>
</dbReference>
<dbReference type="PIRSF" id="PIRSF006060">
    <property type="entry name" value="AA_transporter"/>
    <property type="match status" value="1"/>
</dbReference>
<reference key="1">
    <citation type="journal article" date="2002" name="Nature">
        <title>The genome sequence of Schizosaccharomyces pombe.</title>
        <authorList>
            <person name="Wood V."/>
            <person name="Gwilliam R."/>
            <person name="Rajandream M.A."/>
            <person name="Lyne M.H."/>
            <person name="Lyne R."/>
            <person name="Stewart A."/>
            <person name="Sgouros J.G."/>
            <person name="Peat N."/>
            <person name="Hayles J."/>
            <person name="Baker S.G."/>
            <person name="Basham D."/>
            <person name="Bowman S."/>
            <person name="Brooks K."/>
            <person name="Brown D."/>
            <person name="Brown S."/>
            <person name="Chillingworth T."/>
            <person name="Churcher C.M."/>
            <person name="Collins M."/>
            <person name="Connor R."/>
            <person name="Cronin A."/>
            <person name="Davis P."/>
            <person name="Feltwell T."/>
            <person name="Fraser A."/>
            <person name="Gentles S."/>
            <person name="Goble A."/>
            <person name="Hamlin N."/>
            <person name="Harris D.E."/>
            <person name="Hidalgo J."/>
            <person name="Hodgson G."/>
            <person name="Holroyd S."/>
            <person name="Hornsby T."/>
            <person name="Howarth S."/>
            <person name="Huckle E.J."/>
            <person name="Hunt S."/>
            <person name="Jagels K."/>
            <person name="James K.D."/>
            <person name="Jones L."/>
            <person name="Jones M."/>
            <person name="Leather S."/>
            <person name="McDonald S."/>
            <person name="McLean J."/>
            <person name="Mooney P."/>
            <person name="Moule S."/>
            <person name="Mungall K.L."/>
            <person name="Murphy L.D."/>
            <person name="Niblett D."/>
            <person name="Odell C."/>
            <person name="Oliver K."/>
            <person name="O'Neil S."/>
            <person name="Pearson D."/>
            <person name="Quail M.A."/>
            <person name="Rabbinowitsch E."/>
            <person name="Rutherford K.M."/>
            <person name="Rutter S."/>
            <person name="Saunders D."/>
            <person name="Seeger K."/>
            <person name="Sharp S."/>
            <person name="Skelton J."/>
            <person name="Simmonds M.N."/>
            <person name="Squares R."/>
            <person name="Squares S."/>
            <person name="Stevens K."/>
            <person name="Taylor K."/>
            <person name="Taylor R.G."/>
            <person name="Tivey A."/>
            <person name="Walsh S.V."/>
            <person name="Warren T."/>
            <person name="Whitehead S."/>
            <person name="Woodward J.R."/>
            <person name="Volckaert G."/>
            <person name="Aert R."/>
            <person name="Robben J."/>
            <person name="Grymonprez B."/>
            <person name="Weltjens I."/>
            <person name="Vanstreels E."/>
            <person name="Rieger M."/>
            <person name="Schaefer M."/>
            <person name="Mueller-Auer S."/>
            <person name="Gabel C."/>
            <person name="Fuchs M."/>
            <person name="Duesterhoeft A."/>
            <person name="Fritzc C."/>
            <person name="Holzer E."/>
            <person name="Moestl D."/>
            <person name="Hilbert H."/>
            <person name="Borzym K."/>
            <person name="Langer I."/>
            <person name="Beck A."/>
            <person name="Lehrach H."/>
            <person name="Reinhardt R."/>
            <person name="Pohl T.M."/>
            <person name="Eger P."/>
            <person name="Zimmermann W."/>
            <person name="Wedler H."/>
            <person name="Wambutt R."/>
            <person name="Purnelle B."/>
            <person name="Goffeau A."/>
            <person name="Cadieu E."/>
            <person name="Dreano S."/>
            <person name="Gloux S."/>
            <person name="Lelaure V."/>
            <person name="Mottier S."/>
            <person name="Galibert F."/>
            <person name="Aves S.J."/>
            <person name="Xiang Z."/>
            <person name="Hunt C."/>
            <person name="Moore K."/>
            <person name="Hurst S.M."/>
            <person name="Lucas M."/>
            <person name="Rochet M."/>
            <person name="Gaillardin C."/>
            <person name="Tallada V.A."/>
            <person name="Garzon A."/>
            <person name="Thode G."/>
            <person name="Daga R.R."/>
            <person name="Cruzado L."/>
            <person name="Jimenez J."/>
            <person name="Sanchez M."/>
            <person name="del Rey F."/>
            <person name="Benito J."/>
            <person name="Dominguez A."/>
            <person name="Revuelta J.L."/>
            <person name="Moreno S."/>
            <person name="Armstrong J."/>
            <person name="Forsburg S.L."/>
            <person name="Cerutti L."/>
            <person name="Lowe T."/>
            <person name="McCombie W.R."/>
            <person name="Paulsen I."/>
            <person name="Potashkin J."/>
            <person name="Shpakovski G.V."/>
            <person name="Ussery D."/>
            <person name="Barrell B.G."/>
            <person name="Nurse P."/>
        </authorList>
    </citation>
    <scope>NUCLEOTIDE SEQUENCE [LARGE SCALE GENOMIC DNA]</scope>
    <source>
        <strain>972 / ATCC 24843</strain>
    </source>
</reference>
<accession>O74537</accession>
<feature type="chain" id="PRO_0000054174" description="Uncharacterized amino-acid permease C74.04">
    <location>
        <begin position="1"/>
        <end position="557"/>
    </location>
</feature>
<feature type="transmembrane region" description="Helical" evidence="1">
    <location>
        <begin position="60"/>
        <end position="80"/>
    </location>
</feature>
<feature type="transmembrane region" description="Helical" evidence="1">
    <location>
        <begin position="94"/>
        <end position="114"/>
    </location>
</feature>
<feature type="transmembrane region" description="Helical" evidence="1">
    <location>
        <begin position="214"/>
        <end position="234"/>
    </location>
</feature>
<feature type="transmembrane region" description="Helical" evidence="1">
    <location>
        <begin position="261"/>
        <end position="281"/>
    </location>
</feature>
<feature type="transmembrane region" description="Helical" evidence="1">
    <location>
        <begin position="297"/>
        <end position="317"/>
    </location>
</feature>
<feature type="transmembrane region" description="Helical" evidence="1">
    <location>
        <begin position="348"/>
        <end position="368"/>
    </location>
</feature>
<feature type="transmembrane region" description="Helical" evidence="1">
    <location>
        <begin position="407"/>
        <end position="427"/>
    </location>
</feature>
<feature type="transmembrane region" description="Helical" evidence="1">
    <location>
        <begin position="468"/>
        <end position="488"/>
    </location>
</feature>
<feature type="transmembrane region" description="Helical" evidence="1">
    <location>
        <begin position="498"/>
        <end position="518"/>
    </location>
</feature>
<feature type="region of interest" description="Disordered" evidence="2">
    <location>
        <begin position="17"/>
        <end position="38"/>
    </location>
</feature>
<evidence type="ECO:0000255" key="1"/>
<evidence type="ECO:0000256" key="2">
    <source>
        <dbReference type="SAM" id="MobiDB-lite"/>
    </source>
</evidence>
<evidence type="ECO:0000305" key="3"/>
<protein>
    <recommendedName>
        <fullName>Uncharacterized amino-acid permease C74.04</fullName>
    </recommendedName>
</protein>
<gene>
    <name type="ORF">SPCC74.04</name>
</gene>
<sequence length="557" mass="60156">MAIPILDALTSSSGKKNSAEFSIHSTSNPTNPEEPNITSEADNAEDLAALGYKQEFQRGLSLFSVFSVSFSLLGLLPSVATTLPYSIGYTGTPGLLWGWLIAMVFIICIALSMAELCSAMPTSGGLYYAAAVLAPEGWGPLAAWFTGWSNYIAQLVGGPSINYSTAAMLLGAVNIGNPNYEVQNYQLFLVSIAIQFIHFILASMPTKYIAKLNSVGTYLNTLFLFISMIVILAMSSKNHGFNETSKVWSHIENYTDWPDGFAILMSFCGVIWTMSGYDAPFHMSEETANASVNAPRGIILTAAIGGIMGWVMQIVIAYTVVDQTAVVTGSDSMWATYLSQCLPKRAALGILSLTIVSSFLMGQSNLIASSRIAYSYARDGVLPYSEWVATVNPITKTPIRAVFVNFVIGVLILFLAFAGAITIGAVFSVTAIAAFTAFVAPVAMRVFFVKDADFRTGPFNLGKFSKPIGFCSVSFVALMIPILCFPSVKNPTPAEMNWTCLVFGAPMLAVLIWYAISGRKWFKGPRINLASEGDNSTLEGVELYTGSEELPQKKEKE</sequence>